<evidence type="ECO:0000255" key="1">
    <source>
        <dbReference type="HAMAP-Rule" id="MF_00037"/>
    </source>
</evidence>
<protein>
    <recommendedName>
        <fullName evidence="1">UDP-N-acetylenolpyruvoylglucosamine reductase</fullName>
        <ecNumber evidence="1">1.3.1.98</ecNumber>
    </recommendedName>
    <alternativeName>
        <fullName evidence="1">UDP-N-acetylmuramate dehydrogenase</fullName>
    </alternativeName>
</protein>
<dbReference type="EC" id="1.3.1.98" evidence="1"/>
<dbReference type="EMBL" id="AP009044">
    <property type="protein sequence ID" value="BAF53434.1"/>
    <property type="molecule type" value="Genomic_DNA"/>
</dbReference>
<dbReference type="RefSeq" id="WP_011896677.1">
    <property type="nucleotide sequence ID" value="NC_009342.1"/>
</dbReference>
<dbReference type="SMR" id="A4QB37"/>
<dbReference type="KEGG" id="cgt:cgR_0470"/>
<dbReference type="HOGENOM" id="CLU_035304_0_1_11"/>
<dbReference type="PhylomeDB" id="A4QB37"/>
<dbReference type="UniPathway" id="UPA00219"/>
<dbReference type="Proteomes" id="UP000006698">
    <property type="component" value="Chromosome"/>
</dbReference>
<dbReference type="GO" id="GO:0005829">
    <property type="term" value="C:cytosol"/>
    <property type="evidence" value="ECO:0007669"/>
    <property type="project" value="TreeGrafter"/>
</dbReference>
<dbReference type="GO" id="GO:0071949">
    <property type="term" value="F:FAD binding"/>
    <property type="evidence" value="ECO:0007669"/>
    <property type="project" value="InterPro"/>
</dbReference>
<dbReference type="GO" id="GO:0008762">
    <property type="term" value="F:UDP-N-acetylmuramate dehydrogenase activity"/>
    <property type="evidence" value="ECO:0007669"/>
    <property type="project" value="UniProtKB-UniRule"/>
</dbReference>
<dbReference type="GO" id="GO:0051301">
    <property type="term" value="P:cell division"/>
    <property type="evidence" value="ECO:0007669"/>
    <property type="project" value="UniProtKB-KW"/>
</dbReference>
<dbReference type="GO" id="GO:0071555">
    <property type="term" value="P:cell wall organization"/>
    <property type="evidence" value="ECO:0007669"/>
    <property type="project" value="UniProtKB-KW"/>
</dbReference>
<dbReference type="GO" id="GO:0009252">
    <property type="term" value="P:peptidoglycan biosynthetic process"/>
    <property type="evidence" value="ECO:0007669"/>
    <property type="project" value="UniProtKB-UniRule"/>
</dbReference>
<dbReference type="GO" id="GO:0008360">
    <property type="term" value="P:regulation of cell shape"/>
    <property type="evidence" value="ECO:0007669"/>
    <property type="project" value="UniProtKB-KW"/>
</dbReference>
<dbReference type="Gene3D" id="3.30.465.10">
    <property type="match status" value="1"/>
</dbReference>
<dbReference type="Gene3D" id="3.90.78.10">
    <property type="entry name" value="UDP-N-acetylenolpyruvoylglucosamine reductase, C-terminal domain"/>
    <property type="match status" value="1"/>
</dbReference>
<dbReference type="Gene3D" id="3.30.43.10">
    <property type="entry name" value="Uridine Diphospho-n-acetylenolpyruvylglucosamine Reductase, domain 2"/>
    <property type="match status" value="1"/>
</dbReference>
<dbReference type="HAMAP" id="MF_00037">
    <property type="entry name" value="MurB"/>
    <property type="match status" value="1"/>
</dbReference>
<dbReference type="InterPro" id="IPR016166">
    <property type="entry name" value="FAD-bd_PCMH"/>
</dbReference>
<dbReference type="InterPro" id="IPR036318">
    <property type="entry name" value="FAD-bd_PCMH-like_sf"/>
</dbReference>
<dbReference type="InterPro" id="IPR016167">
    <property type="entry name" value="FAD-bd_PCMH_sub1"/>
</dbReference>
<dbReference type="InterPro" id="IPR016169">
    <property type="entry name" value="FAD-bd_PCMH_sub2"/>
</dbReference>
<dbReference type="InterPro" id="IPR003170">
    <property type="entry name" value="MurB"/>
</dbReference>
<dbReference type="InterPro" id="IPR011601">
    <property type="entry name" value="MurB_C"/>
</dbReference>
<dbReference type="InterPro" id="IPR036635">
    <property type="entry name" value="MurB_C_sf"/>
</dbReference>
<dbReference type="InterPro" id="IPR006094">
    <property type="entry name" value="Oxid_FAD_bind_N"/>
</dbReference>
<dbReference type="NCBIfam" id="NF010478">
    <property type="entry name" value="PRK13903.1"/>
    <property type="match status" value="1"/>
</dbReference>
<dbReference type="PANTHER" id="PTHR21071">
    <property type="entry name" value="UDP-N-ACETYLENOLPYRUVOYLGLUCOSAMINE REDUCTASE"/>
    <property type="match status" value="1"/>
</dbReference>
<dbReference type="PANTHER" id="PTHR21071:SF4">
    <property type="entry name" value="UDP-N-ACETYLENOLPYRUVOYLGLUCOSAMINE REDUCTASE"/>
    <property type="match status" value="1"/>
</dbReference>
<dbReference type="Pfam" id="PF01565">
    <property type="entry name" value="FAD_binding_4"/>
    <property type="match status" value="1"/>
</dbReference>
<dbReference type="Pfam" id="PF02873">
    <property type="entry name" value="MurB_C"/>
    <property type="match status" value="1"/>
</dbReference>
<dbReference type="SUPFAM" id="SSF56176">
    <property type="entry name" value="FAD-binding/transporter-associated domain-like"/>
    <property type="match status" value="1"/>
</dbReference>
<dbReference type="SUPFAM" id="SSF56194">
    <property type="entry name" value="Uridine diphospho-N-Acetylenolpyruvylglucosamine reductase, MurB, C-terminal domain"/>
    <property type="match status" value="1"/>
</dbReference>
<dbReference type="PROSITE" id="PS51387">
    <property type="entry name" value="FAD_PCMH"/>
    <property type="match status" value="1"/>
</dbReference>
<sequence length="368" mass="38998">MLDSSLAQEIAAIDGVELDSKVTFADLTTLRIGGKPRSAVRCQTTEALVSAIKLLDDASLPLLIVGGGSNLVVADGDLDVIAVIIETDDVSINLTDGLLTADAGAVWDDVVHLSVDAGLGGIECLSGIPGSAGATPVQNVGAYGTEVSDVLTRVQLLDRTTHQVSWVDASELDLSYRYSNLKFTNRAVVLAIELQLLTDGLSAPLRFGELGRRLAISEAEPHPRRPVRMVRDAVLELRRAKGMVVEHTDHDTWSAGSFFTNPIVDPALADAVFEKVGEPTMPRFPAGDGKEKLSAAWLIERAGFKKGHPGAGAKASLSTKHTLALTNRGDARASDLVALAKEIRDGVLETFGVTLVPEPVWIGISIDD</sequence>
<keyword id="KW-0131">Cell cycle</keyword>
<keyword id="KW-0132">Cell division</keyword>
<keyword id="KW-0133">Cell shape</keyword>
<keyword id="KW-0961">Cell wall biogenesis/degradation</keyword>
<keyword id="KW-0963">Cytoplasm</keyword>
<keyword id="KW-0274">FAD</keyword>
<keyword id="KW-0285">Flavoprotein</keyword>
<keyword id="KW-0521">NADP</keyword>
<keyword id="KW-0560">Oxidoreductase</keyword>
<keyword id="KW-0573">Peptidoglycan synthesis</keyword>
<reference key="1">
    <citation type="journal article" date="2007" name="Microbiology">
        <title>Comparative analysis of the Corynebacterium glutamicum group and complete genome sequence of strain R.</title>
        <authorList>
            <person name="Yukawa H."/>
            <person name="Omumasaba C.A."/>
            <person name="Nonaka H."/>
            <person name="Kos P."/>
            <person name="Okai N."/>
            <person name="Suzuki N."/>
            <person name="Suda M."/>
            <person name="Tsuge Y."/>
            <person name="Watanabe J."/>
            <person name="Ikeda Y."/>
            <person name="Vertes A.A."/>
            <person name="Inui M."/>
        </authorList>
    </citation>
    <scope>NUCLEOTIDE SEQUENCE [LARGE SCALE GENOMIC DNA]</scope>
    <source>
        <strain>R</strain>
    </source>
</reference>
<comment type="function">
    <text evidence="1">Cell wall formation.</text>
</comment>
<comment type="catalytic activity">
    <reaction evidence="1">
        <text>UDP-N-acetyl-alpha-D-muramate + NADP(+) = UDP-N-acetyl-3-O-(1-carboxyvinyl)-alpha-D-glucosamine + NADPH + H(+)</text>
        <dbReference type="Rhea" id="RHEA:12248"/>
        <dbReference type="ChEBI" id="CHEBI:15378"/>
        <dbReference type="ChEBI" id="CHEBI:57783"/>
        <dbReference type="ChEBI" id="CHEBI:58349"/>
        <dbReference type="ChEBI" id="CHEBI:68483"/>
        <dbReference type="ChEBI" id="CHEBI:70757"/>
        <dbReference type="EC" id="1.3.1.98"/>
    </reaction>
</comment>
<comment type="cofactor">
    <cofactor evidence="1">
        <name>FAD</name>
        <dbReference type="ChEBI" id="CHEBI:57692"/>
    </cofactor>
</comment>
<comment type="pathway">
    <text evidence="1">Cell wall biogenesis; peptidoglycan biosynthesis.</text>
</comment>
<comment type="subcellular location">
    <subcellularLocation>
        <location evidence="1">Cytoplasm</location>
    </subcellularLocation>
</comment>
<comment type="similarity">
    <text evidence="1">Belongs to the MurB family.</text>
</comment>
<accession>A4QB37</accession>
<name>MURB_CORGB</name>
<proteinExistence type="inferred from homology"/>
<feature type="chain" id="PRO_0000332455" description="UDP-N-acetylenolpyruvoylglucosamine reductase">
    <location>
        <begin position="1"/>
        <end position="368"/>
    </location>
</feature>
<feature type="domain" description="FAD-binding PCMH-type" evidence="1">
    <location>
        <begin position="32"/>
        <end position="199"/>
    </location>
</feature>
<feature type="active site" evidence="1">
    <location>
        <position position="177"/>
    </location>
</feature>
<feature type="active site" description="Proton donor" evidence="1">
    <location>
        <position position="257"/>
    </location>
</feature>
<feature type="active site" evidence="1">
    <location>
        <position position="358"/>
    </location>
</feature>
<organism>
    <name type="scientific">Corynebacterium glutamicum (strain R)</name>
    <dbReference type="NCBI Taxonomy" id="340322"/>
    <lineage>
        <taxon>Bacteria</taxon>
        <taxon>Bacillati</taxon>
        <taxon>Actinomycetota</taxon>
        <taxon>Actinomycetes</taxon>
        <taxon>Mycobacteriales</taxon>
        <taxon>Corynebacteriaceae</taxon>
        <taxon>Corynebacterium</taxon>
    </lineage>
</organism>
<gene>
    <name evidence="1" type="primary">murB</name>
    <name type="ordered locus">cgR_0470</name>
</gene>